<evidence type="ECO:0000255" key="1">
    <source>
        <dbReference type="HAMAP-Rule" id="MF_00048"/>
    </source>
</evidence>
<organism>
    <name type="scientific">Nitrobacter winogradskyi (strain ATCC 25391 / DSM 10237 / CIP 104748 / NCIMB 11846 / Nb-255)</name>
    <dbReference type="NCBI Taxonomy" id="323098"/>
    <lineage>
        <taxon>Bacteria</taxon>
        <taxon>Pseudomonadati</taxon>
        <taxon>Pseudomonadota</taxon>
        <taxon>Alphaproteobacteria</taxon>
        <taxon>Hyphomicrobiales</taxon>
        <taxon>Nitrobacteraceae</taxon>
        <taxon>Nitrobacter</taxon>
    </lineage>
</organism>
<accession>Q3SWF7</accession>
<feature type="chain" id="PRO_0000336213" description="UPF0102 protein Nwi_0116">
    <location>
        <begin position="1"/>
        <end position="118"/>
    </location>
</feature>
<comment type="similarity">
    <text evidence="1">Belongs to the UPF0102 family.</text>
</comment>
<proteinExistence type="inferred from homology"/>
<dbReference type="EMBL" id="CP000115">
    <property type="protein sequence ID" value="ABA03384.1"/>
    <property type="molecule type" value="Genomic_DNA"/>
</dbReference>
<dbReference type="SMR" id="Q3SWF7"/>
<dbReference type="STRING" id="323098.Nwi_0116"/>
<dbReference type="KEGG" id="nwi:Nwi_0116"/>
<dbReference type="eggNOG" id="COG0792">
    <property type="taxonomic scope" value="Bacteria"/>
</dbReference>
<dbReference type="HOGENOM" id="CLU_115353_0_2_5"/>
<dbReference type="Proteomes" id="UP000002531">
    <property type="component" value="Chromosome"/>
</dbReference>
<dbReference type="GO" id="GO:0003676">
    <property type="term" value="F:nucleic acid binding"/>
    <property type="evidence" value="ECO:0007669"/>
    <property type="project" value="InterPro"/>
</dbReference>
<dbReference type="CDD" id="cd20736">
    <property type="entry name" value="PoNe_Nuclease"/>
    <property type="match status" value="1"/>
</dbReference>
<dbReference type="Gene3D" id="3.40.1350.10">
    <property type="match status" value="1"/>
</dbReference>
<dbReference type="HAMAP" id="MF_00048">
    <property type="entry name" value="UPF0102"/>
    <property type="match status" value="1"/>
</dbReference>
<dbReference type="InterPro" id="IPR011335">
    <property type="entry name" value="Restrct_endonuc-II-like"/>
</dbReference>
<dbReference type="InterPro" id="IPR011856">
    <property type="entry name" value="tRNA_endonuc-like_dom_sf"/>
</dbReference>
<dbReference type="InterPro" id="IPR003509">
    <property type="entry name" value="UPF0102_YraN-like"/>
</dbReference>
<dbReference type="NCBIfam" id="NF009150">
    <property type="entry name" value="PRK12497.1-3"/>
    <property type="match status" value="1"/>
</dbReference>
<dbReference type="NCBIfam" id="NF009151">
    <property type="entry name" value="PRK12497.1-5"/>
    <property type="match status" value="1"/>
</dbReference>
<dbReference type="NCBIfam" id="TIGR00252">
    <property type="entry name" value="YraN family protein"/>
    <property type="match status" value="1"/>
</dbReference>
<dbReference type="PANTHER" id="PTHR34039">
    <property type="entry name" value="UPF0102 PROTEIN YRAN"/>
    <property type="match status" value="1"/>
</dbReference>
<dbReference type="PANTHER" id="PTHR34039:SF1">
    <property type="entry name" value="UPF0102 PROTEIN YRAN"/>
    <property type="match status" value="1"/>
</dbReference>
<dbReference type="Pfam" id="PF02021">
    <property type="entry name" value="UPF0102"/>
    <property type="match status" value="1"/>
</dbReference>
<dbReference type="SUPFAM" id="SSF52980">
    <property type="entry name" value="Restriction endonuclease-like"/>
    <property type="match status" value="1"/>
</dbReference>
<gene>
    <name type="ordered locus">Nwi_0116</name>
</gene>
<name>Y116_NITWN</name>
<sequence length="118" mass="13580">MRVAAFHAGLSAERRAAAYLIAKGYRILARRFRTPYGEIDIVARRRQLLAFVEVKARRSLDDAAYAVTRKQQQRIINAAQAWLMAHPEHETFEFRFDAMLIAPRRLPRHLLGAFDAST</sequence>
<reference key="1">
    <citation type="journal article" date="2006" name="Appl. Environ. Microbiol.">
        <title>Genome sequence of the chemolithoautotrophic nitrite-oxidizing bacterium Nitrobacter winogradskyi Nb-255.</title>
        <authorList>
            <person name="Starkenburg S.R."/>
            <person name="Chain P.S.G."/>
            <person name="Sayavedra-Soto L.A."/>
            <person name="Hauser L."/>
            <person name="Land M.L."/>
            <person name="Larimer F.W."/>
            <person name="Malfatti S.A."/>
            <person name="Klotz M.G."/>
            <person name="Bottomley P.J."/>
            <person name="Arp D.J."/>
            <person name="Hickey W.J."/>
        </authorList>
    </citation>
    <scope>NUCLEOTIDE SEQUENCE [LARGE SCALE GENOMIC DNA]</scope>
    <source>
        <strain>ATCC 25391 / DSM 10237 / CIP 104748 / NCIMB 11846 / Nb-255</strain>
    </source>
</reference>
<protein>
    <recommendedName>
        <fullName evidence="1">UPF0102 protein Nwi_0116</fullName>
    </recommendedName>
</protein>
<keyword id="KW-1185">Reference proteome</keyword>